<gene>
    <name type="primary">fpoJ</name>
    <name type="ordered locus">MM_2485</name>
</gene>
<dbReference type="EC" id="1.5.98.3" evidence="3"/>
<dbReference type="EMBL" id="AF228525">
    <property type="protein sequence ID" value="AAF65737.1"/>
    <property type="molecule type" value="Genomic_DNA"/>
</dbReference>
<dbReference type="EMBL" id="AE008384">
    <property type="protein sequence ID" value="AAM32181.1"/>
    <property type="status" value="ALT_FRAME"/>
    <property type="molecule type" value="Genomic_DNA"/>
</dbReference>
<dbReference type="SMR" id="Q8PU61"/>
<dbReference type="TCDB" id="3.D.9.1.1">
    <property type="family name" value="the h(+)-translocating f420h2 dehydrogenase (f420h2dh) family"/>
</dbReference>
<dbReference type="KEGG" id="mma:MM_2485"/>
<dbReference type="PATRIC" id="fig|192952.21.peg.2844"/>
<dbReference type="eggNOG" id="arCOG04654">
    <property type="taxonomic scope" value="Archaea"/>
</dbReference>
<dbReference type="HOGENOM" id="CLU_170071_2_0_2"/>
<dbReference type="BRENDA" id="1.12.98.3">
    <property type="organism ID" value="3270"/>
</dbReference>
<dbReference type="Proteomes" id="UP000000595">
    <property type="component" value="Chromosome"/>
</dbReference>
<dbReference type="GO" id="GO:0005886">
    <property type="term" value="C:plasma membrane"/>
    <property type="evidence" value="ECO:0007669"/>
    <property type="project" value="UniProtKB-SubCell"/>
</dbReference>
<dbReference type="GO" id="GO:0051911">
    <property type="term" value="F:Methanosarcina-phenazine hydrogenase activity"/>
    <property type="evidence" value="ECO:0007669"/>
    <property type="project" value="UniProtKB-EC"/>
</dbReference>
<dbReference type="GO" id="GO:0008137">
    <property type="term" value="F:NADH dehydrogenase (ubiquinone) activity"/>
    <property type="evidence" value="ECO:0007669"/>
    <property type="project" value="InterPro"/>
</dbReference>
<dbReference type="GO" id="GO:0043738">
    <property type="term" value="F:reduced coenzyme F420 dehydrogenase activity"/>
    <property type="evidence" value="ECO:0007669"/>
    <property type="project" value="RHEA"/>
</dbReference>
<dbReference type="GO" id="GO:0015948">
    <property type="term" value="P:methanogenesis"/>
    <property type="evidence" value="ECO:0007669"/>
    <property type="project" value="UniProtKB-KW"/>
</dbReference>
<dbReference type="GO" id="GO:0015945">
    <property type="term" value="P:methanol metabolic process"/>
    <property type="evidence" value="ECO:0007669"/>
    <property type="project" value="UniProtKB-KW"/>
</dbReference>
<dbReference type="Gene3D" id="1.20.120.1200">
    <property type="entry name" value="NADH-ubiquinone/plastoquinone oxidoreductase chain 6, subunit NuoJ"/>
    <property type="match status" value="1"/>
</dbReference>
<dbReference type="InterPro" id="IPR053607">
    <property type="entry name" value="Complex_I_subunit_6-like"/>
</dbReference>
<dbReference type="InterPro" id="IPR001457">
    <property type="entry name" value="NADH_UbQ/plastoQ_OxRdtase_su6"/>
</dbReference>
<dbReference type="InterPro" id="IPR042106">
    <property type="entry name" value="Nuo/plastoQ_OxRdtase_6_NuoJ"/>
</dbReference>
<dbReference type="NCBIfam" id="NF040613">
    <property type="entry name" value="F420_dehyd_FpoJ"/>
    <property type="match status" value="1"/>
</dbReference>
<dbReference type="NCBIfam" id="NF005025">
    <property type="entry name" value="PRK06433.1-5"/>
    <property type="match status" value="1"/>
</dbReference>
<dbReference type="PANTHER" id="PTHR33269">
    <property type="entry name" value="NADH-UBIQUINONE OXIDOREDUCTASE CHAIN 6"/>
    <property type="match status" value="1"/>
</dbReference>
<dbReference type="PANTHER" id="PTHR33269:SF17">
    <property type="entry name" value="NADH-UBIQUINONE OXIDOREDUCTASE CHAIN 6"/>
    <property type="match status" value="1"/>
</dbReference>
<dbReference type="Pfam" id="PF00499">
    <property type="entry name" value="Oxidored_q3"/>
    <property type="match status" value="1"/>
</dbReference>
<evidence type="ECO:0000255" key="1"/>
<evidence type="ECO:0000269" key="2">
    <source>
    </source>
</evidence>
<evidence type="ECO:0000269" key="3">
    <source ref="1"/>
</evidence>
<evidence type="ECO:0000305" key="4"/>
<feature type="chain" id="PRO_0000423955" description="F(420)H(2) dehydrogenase subunit J">
    <location>
        <begin position="1"/>
        <end position="176"/>
    </location>
</feature>
<feature type="transmembrane region" description="Helical" evidence="1">
    <location>
        <begin position="13"/>
        <end position="33"/>
    </location>
</feature>
<feature type="transmembrane region" description="Helical" evidence="1">
    <location>
        <begin position="39"/>
        <end position="59"/>
    </location>
</feature>
<feature type="transmembrane region" description="Helical" evidence="1">
    <location>
        <begin position="64"/>
        <end position="84"/>
    </location>
</feature>
<feature type="transmembrane region" description="Helical" evidence="1">
    <location>
        <begin position="99"/>
        <end position="119"/>
    </location>
</feature>
<feature type="transmembrane region" description="Helical" evidence="1">
    <location>
        <begin position="140"/>
        <end position="160"/>
    </location>
</feature>
<organism>
    <name type="scientific">Methanosarcina mazei (strain ATCC BAA-159 / DSM 3647 / Goe1 / Go1 / JCM 11833 / OCM 88)</name>
    <name type="common">Methanosarcina frisia</name>
    <dbReference type="NCBI Taxonomy" id="192952"/>
    <lineage>
        <taxon>Archaea</taxon>
        <taxon>Methanobacteriati</taxon>
        <taxon>Methanobacteriota</taxon>
        <taxon>Stenosarchaea group</taxon>
        <taxon>Methanomicrobia</taxon>
        <taxon>Methanosarcinales</taxon>
        <taxon>Methanosarcinaceae</taxon>
        <taxon>Methanosarcina</taxon>
    </lineage>
</organism>
<accession>Q8PU61</accession>
<accession>Q9P9F7</accession>
<comment type="function">
    <text evidence="2 3">Component of the F(420)H(2) dehydrogenase (FPO complex) which is part of the energy-conserving F(420)H(2):heterodisulfide oxidoreductase system. The membrane-bound electron transfer system of the complex plays an important role in the metabolism of methylotrophic methanogens when the organisms grow on methanol or methylamines. Catalyzes the oxidation of methanophenazine to dihydromethanophenazine. It shuttles electrons from F(420)H(2), via FAD and iron-sulfur (Fe-S) centers, to methanophenazine (an electron carrier in the membrane). It couples the redox reaction to proton translocation (for every two electrons transferred, two hydrogen ions are translocated across the cytoplasmic membrane), and thus conserves the redox energy in a proton gradient. It also catalyzes the oxidation of F(420)H(2) with quinones such as 2,3-dimethyl-1,4-naphthoquinone, 2-methyl-1,4-naphthoquinone and tetramethyl-p-benzoquinone.</text>
</comment>
<comment type="catalytic activity">
    <reaction evidence="3">
        <text>methanophenazine + reduced coenzyme F420-(gamma-L-Glu)(n) = dihydromethanophenazine + oxidized coenzyme F420-(gamma-L-Glu)(n) + H(+)</text>
        <dbReference type="Rhea" id="RHEA:54752"/>
        <dbReference type="Rhea" id="RHEA-COMP:12939"/>
        <dbReference type="Rhea" id="RHEA-COMP:14378"/>
        <dbReference type="ChEBI" id="CHEBI:15378"/>
        <dbReference type="ChEBI" id="CHEBI:29118"/>
        <dbReference type="ChEBI" id="CHEBI:50375"/>
        <dbReference type="ChEBI" id="CHEBI:133980"/>
        <dbReference type="ChEBI" id="CHEBI:139511"/>
        <dbReference type="EC" id="1.5.98.3"/>
    </reaction>
</comment>
<comment type="biophysicochemical properties">
    <kinetics>
        <KM evidence="3">7 uM for F(420)H(2) (at 37 degrees Celsius and pH 7)</KM>
        <Vmax evidence="3">17.0 umol/min/mg enzyme (at 37 degrees Celsius and pH 7)</Vmax>
        <text>Measured for the whole complex.</text>
    </kinetics>
    <phDependence>
        <text evidence="3">Optimum pH is 8.5.</text>
    </phDependence>
    <temperatureDependence>
        <text evidence="3">Optimum temperature is 39 degrees Celsius.</text>
    </temperatureDependence>
</comment>
<comment type="subunit">
    <text evidence="2">The FPO complex is composed of at least 13 different subunits. FpoA, FpoH, FpoJ, FpoK, FpoL, FpoM and FpoN proteins constitute the membrane sector of the complex.</text>
</comment>
<comment type="subcellular location">
    <subcellularLocation>
        <location evidence="4">Cell membrane</location>
        <topology evidence="4">Multi-pass membrane protein</topology>
    </subcellularLocation>
</comment>
<comment type="similarity">
    <text evidence="4">Belongs to the complex I subunit 6 family.</text>
</comment>
<comment type="sequence caution" evidence="4">
    <conflict type="frameshift">
        <sequence resource="EMBL-CDS" id="AAM32181"/>
    </conflict>
</comment>
<reference key="1">
    <citation type="journal article" date="1997" name="FEMS Microbiol. Lett.">
        <title>Purification and properties of an F420H2 dehydrogenase from Methanosarcina mazei Go1.</title>
        <authorList>
            <person name="Abken H.-J."/>
            <person name="Deppenmeier U."/>
        </authorList>
    </citation>
    <scope>NUCLEOTIDE SEQUENCE [GENOMIC DNA]</scope>
    <scope>FUNCTION</scope>
    <scope>CATALYTIC ACTIVITY</scope>
    <scope>BIOPHYSICOCHEMICAL PROPERTIES</scope>
    <scope>SUBSTRATE SPECIFICITY</scope>
    <scope>SUBCELLULAR LOCATION</scope>
    <source>
        <strain>ATCC BAA-159 / DSM 3647 / Goe1 / Go1 / JCM 11833 / OCM 88</strain>
    </source>
</reference>
<reference key="2">
    <citation type="journal article" date="2000" name="J. Biol. Chem.">
        <title>The F420H2 dehydrogenase from Methanosarcina mazei is a Redox-driven proton pump closely related to NADH dehydrogenases.</title>
        <authorList>
            <person name="Baumer S."/>
            <person name="Ide T."/>
            <person name="Jacobi C."/>
            <person name="Johann A."/>
            <person name="Gottschalk G."/>
            <person name="Deppenmeier U."/>
        </authorList>
    </citation>
    <scope>NUCLEOTIDE SEQUENCE [GENOMIC DNA]</scope>
    <scope>FUNCTION IN THE PROTON TRANSLOCATION</scope>
    <scope>SUBUNIT</scope>
    <scope>NOMENCLATURE</scope>
    <source>
        <strain>ATCC BAA-159 / DSM 3647 / Goe1 / Go1 / JCM 11833 / OCM 88</strain>
    </source>
</reference>
<reference key="3">
    <citation type="journal article" date="2002" name="J. Mol. Microbiol. Biotechnol.">
        <title>The genome of Methanosarcina mazei: evidence for lateral gene transfer between Bacteria and Archaea.</title>
        <authorList>
            <person name="Deppenmeier U."/>
            <person name="Johann A."/>
            <person name="Hartsch T."/>
            <person name="Merkl R."/>
            <person name="Schmitz R.A."/>
            <person name="Martinez-Arias R."/>
            <person name="Henne A."/>
            <person name="Wiezer A."/>
            <person name="Baeumer S."/>
            <person name="Jacobi C."/>
            <person name="Brueggemann H."/>
            <person name="Lienard T."/>
            <person name="Christmann A."/>
            <person name="Boemecke M."/>
            <person name="Steckel S."/>
            <person name="Bhattacharyya A."/>
            <person name="Lykidis A."/>
            <person name="Overbeek R."/>
            <person name="Klenk H.-P."/>
            <person name="Gunsalus R.P."/>
            <person name="Fritz H.-J."/>
            <person name="Gottschalk G."/>
        </authorList>
    </citation>
    <scope>NUCLEOTIDE SEQUENCE [LARGE SCALE GENOMIC DNA]</scope>
    <source>
        <strain>ATCC BAA-159 / DSM 3647 / Goe1 / Go1 / JCM 11833 / OCM 88</strain>
    </source>
</reference>
<proteinExistence type="evidence at protein level"/>
<protein>
    <recommendedName>
        <fullName>F(420)H(2) dehydrogenase subunit J</fullName>
        <ecNumber evidence="3">1.5.98.3</ecNumber>
    </recommendedName>
    <alternativeName>
        <fullName>F(420)H(2)-dependent phenazine dehydrogenase subunit J</fullName>
    </alternativeName>
    <alternativeName>
        <fullName>F(420)H(2)-dependent phenazine oxidoreductase subunit J</fullName>
        <shortName>FPO subunit J</shortName>
    </alternativeName>
    <alternativeName>
        <fullName>Methanophenazine hydrogenase subunit J</fullName>
    </alternativeName>
    <alternativeName>
        <fullName>Methanosarcina-phenazine hydrogenase subunit J</fullName>
    </alternativeName>
</protein>
<keyword id="KW-1003">Cell membrane</keyword>
<keyword id="KW-0249">Electron transport</keyword>
<keyword id="KW-0472">Membrane</keyword>
<keyword id="KW-0484">Methanogenesis</keyword>
<keyword id="KW-0485">Methanol utilization</keyword>
<keyword id="KW-0560">Oxidoreductase</keyword>
<keyword id="KW-0812">Transmembrane</keyword>
<keyword id="KW-1133">Transmembrane helix</keyword>
<keyword id="KW-0813">Transport</keyword>
<sequence length="176" mass="18513">MIDPGTVGAALETAVFGLLALVTVFFAIFVVIAKDVVRAGLALIMCMFGVAGLYILLNAQFLGVIQVLVYIGAIGVLILFAVMLTKREIGGGPVQINRPLAFLVCLLFVAVVVTGAFGTSWNTVSELPENPADPSNIEGIGMLIFTHFVAPFEVLSIVLLASLIGAIYMAKGEGNR</sequence>
<name>FPOJ_METMA</name>